<name>YJA9_YEAST</name>
<accession>P47078</accession>
<comment type="PTM">
    <text evidence="2">N-glycosylated.</text>
</comment>
<feature type="chain" id="PRO_0000203078" description="Uncharacterized protein YJL009W">
    <location>
        <begin position="1"/>
        <end position="108"/>
    </location>
</feature>
<feature type="glycosylation site" description="N-linked (GlcNAc...) asparagine" evidence="1">
    <location>
        <position position="33"/>
    </location>
</feature>
<protein>
    <recommendedName>
        <fullName>Uncharacterized protein YJL009W</fullName>
    </recommendedName>
</protein>
<evidence type="ECO:0000255" key="1"/>
<evidence type="ECO:0000269" key="2">
    <source>
    </source>
</evidence>
<dbReference type="EMBL" id="Z49284">
    <property type="protein sequence ID" value="CAA89299.1"/>
    <property type="molecule type" value="Genomic_DNA"/>
</dbReference>
<dbReference type="EMBL" id="BK006943">
    <property type="status" value="NOT_ANNOTATED_CDS"/>
    <property type="molecule type" value="Genomic_DNA"/>
</dbReference>
<dbReference type="PIR" id="S56780">
    <property type="entry name" value="S56780"/>
</dbReference>
<dbReference type="STRING" id="4932.YJL009W"/>
<dbReference type="GlyGen" id="P47078">
    <property type="glycosylation" value="1 site"/>
</dbReference>
<dbReference type="PaxDb" id="4932-YJL009W"/>
<dbReference type="EnsemblFungi" id="YJL009W_mRNA">
    <property type="protein sequence ID" value="YJL009W"/>
    <property type="gene ID" value="YJL009W"/>
</dbReference>
<dbReference type="AGR" id="SGD:S000003546"/>
<dbReference type="SGD" id="S000003546">
    <property type="gene designation" value="YJL009W"/>
</dbReference>
<dbReference type="HOGENOM" id="CLU_2199063_0_0_1"/>
<dbReference type="InParanoid" id="P47078"/>
<dbReference type="PRO" id="PR:P47078"/>
<dbReference type="Proteomes" id="UP000002311">
    <property type="component" value="Chromosome X"/>
</dbReference>
<dbReference type="RNAct" id="P47078">
    <property type="molecule type" value="protein"/>
</dbReference>
<proteinExistence type="evidence at protein level"/>
<sequence length="108" mass="12658">MIQPSKFENLIAIYDIIFCCLQVYLLCKYKDANKSVFLVPVTWPWALRCSWTTRLLCHDNLVNGKHSSCSFCSDVNSKLFRCKHVINIFLSDVLYTFIRFAINIHTFI</sequence>
<keyword id="KW-0325">Glycoprotein</keyword>
<keyword id="KW-1185">Reference proteome</keyword>
<gene>
    <name type="ordered locus">YJL009W</name>
    <name type="ORF">J1369</name>
</gene>
<reference key="1">
    <citation type="journal article" date="1996" name="EMBO J.">
        <title>Complete nucleotide sequence of Saccharomyces cerevisiae chromosome X.</title>
        <authorList>
            <person name="Galibert F."/>
            <person name="Alexandraki D."/>
            <person name="Baur A."/>
            <person name="Boles E."/>
            <person name="Chalwatzis N."/>
            <person name="Chuat J.-C."/>
            <person name="Coster F."/>
            <person name="Cziepluch C."/>
            <person name="de Haan M."/>
            <person name="Domdey H."/>
            <person name="Durand P."/>
            <person name="Entian K.-D."/>
            <person name="Gatius M."/>
            <person name="Goffeau A."/>
            <person name="Grivell L.A."/>
            <person name="Hennemann A."/>
            <person name="Herbert C.J."/>
            <person name="Heumann K."/>
            <person name="Hilger F."/>
            <person name="Hollenberg C.P."/>
            <person name="Huang M.-E."/>
            <person name="Jacq C."/>
            <person name="Jauniaux J.-C."/>
            <person name="Katsoulou C."/>
            <person name="Kirchrath L."/>
            <person name="Kleine K."/>
            <person name="Kordes E."/>
            <person name="Koetter P."/>
            <person name="Liebl S."/>
            <person name="Louis E.J."/>
            <person name="Manus V."/>
            <person name="Mewes H.-W."/>
            <person name="Miosga T."/>
            <person name="Obermaier B."/>
            <person name="Perea J."/>
            <person name="Pohl T.M."/>
            <person name="Portetelle D."/>
            <person name="Pujol A."/>
            <person name="Purnelle B."/>
            <person name="Ramezani Rad M."/>
            <person name="Rasmussen S.W."/>
            <person name="Rose M."/>
            <person name="Rossau R."/>
            <person name="Schaaff-Gerstenschlaeger I."/>
            <person name="Smits P.H.M."/>
            <person name="Scarcez T."/>
            <person name="Soriano N."/>
            <person name="To Van D."/>
            <person name="Tzermia M."/>
            <person name="Van Broekhoven A."/>
            <person name="Vandenbol M."/>
            <person name="Wedler H."/>
            <person name="von Wettstein D."/>
            <person name="Wambutt R."/>
            <person name="Zagulski M."/>
            <person name="Zollner A."/>
            <person name="Karpfinger-Hartl L."/>
        </authorList>
    </citation>
    <scope>NUCLEOTIDE SEQUENCE [LARGE SCALE GENOMIC DNA]</scope>
    <source>
        <strain>ATCC 204508 / S288c</strain>
    </source>
</reference>
<reference key="2">
    <citation type="journal article" date="2014" name="G3 (Bethesda)">
        <title>The reference genome sequence of Saccharomyces cerevisiae: Then and now.</title>
        <authorList>
            <person name="Engel S.R."/>
            <person name="Dietrich F.S."/>
            <person name="Fisk D.G."/>
            <person name="Binkley G."/>
            <person name="Balakrishnan R."/>
            <person name="Costanzo M.C."/>
            <person name="Dwight S.S."/>
            <person name="Hitz B.C."/>
            <person name="Karra K."/>
            <person name="Nash R.S."/>
            <person name="Weng S."/>
            <person name="Wong E.D."/>
            <person name="Lloyd P."/>
            <person name="Skrzypek M.S."/>
            <person name="Miyasato S.R."/>
            <person name="Simison M."/>
            <person name="Cherry J.M."/>
        </authorList>
    </citation>
    <scope>GENOME REANNOTATION</scope>
    <source>
        <strain>ATCC 204508 / S288c</strain>
    </source>
</reference>
<reference key="3">
    <citation type="journal article" date="2009" name="Mol. Syst. Biol.">
        <title>Global analysis of the glycoproteome in Saccharomyces cerevisiae reveals new roles for protein glycosylation in eukaryotes.</title>
        <authorList>
            <person name="Kung L.A."/>
            <person name="Tao S.-C."/>
            <person name="Qian J."/>
            <person name="Smith M.G."/>
            <person name="Snyder M."/>
            <person name="Zhu H."/>
        </authorList>
    </citation>
    <scope>GLYCOSYLATION [LARGE SCALE ANALYSIS]</scope>
</reference>
<organism>
    <name type="scientific">Saccharomyces cerevisiae (strain ATCC 204508 / S288c)</name>
    <name type="common">Baker's yeast</name>
    <dbReference type="NCBI Taxonomy" id="559292"/>
    <lineage>
        <taxon>Eukaryota</taxon>
        <taxon>Fungi</taxon>
        <taxon>Dikarya</taxon>
        <taxon>Ascomycota</taxon>
        <taxon>Saccharomycotina</taxon>
        <taxon>Saccharomycetes</taxon>
        <taxon>Saccharomycetales</taxon>
        <taxon>Saccharomycetaceae</taxon>
        <taxon>Saccharomyces</taxon>
    </lineage>
</organism>